<feature type="chain" id="PRO_1000024306" description="Multidrug resistance protein MdtB">
    <location>
        <begin position="1"/>
        <end position="1040"/>
    </location>
</feature>
<feature type="transmembrane region" description="Helical" evidence="1">
    <location>
        <begin position="25"/>
        <end position="45"/>
    </location>
</feature>
<feature type="transmembrane region" description="Helical" evidence="1">
    <location>
        <begin position="347"/>
        <end position="367"/>
    </location>
</feature>
<feature type="transmembrane region" description="Helical" evidence="1">
    <location>
        <begin position="369"/>
        <end position="389"/>
    </location>
</feature>
<feature type="transmembrane region" description="Helical" evidence="1">
    <location>
        <begin position="396"/>
        <end position="416"/>
    </location>
</feature>
<feature type="transmembrane region" description="Helical" evidence="1">
    <location>
        <begin position="440"/>
        <end position="460"/>
    </location>
</feature>
<feature type="transmembrane region" description="Helical" evidence="1">
    <location>
        <begin position="472"/>
        <end position="492"/>
    </location>
</feature>
<feature type="transmembrane region" description="Helical" evidence="1">
    <location>
        <begin position="537"/>
        <end position="557"/>
    </location>
</feature>
<feature type="transmembrane region" description="Helical" evidence="1">
    <location>
        <begin position="863"/>
        <end position="883"/>
    </location>
</feature>
<feature type="transmembrane region" description="Helical" evidence="1">
    <location>
        <begin position="888"/>
        <end position="908"/>
    </location>
</feature>
<feature type="transmembrane region" description="Helical" evidence="1">
    <location>
        <begin position="910"/>
        <end position="930"/>
    </location>
</feature>
<feature type="transmembrane region" description="Helical" evidence="1">
    <location>
        <begin position="968"/>
        <end position="988"/>
    </location>
</feature>
<feature type="transmembrane region" description="Helical" evidence="1">
    <location>
        <begin position="998"/>
        <end position="1018"/>
    </location>
</feature>
<reference key="1">
    <citation type="journal article" date="2004" name="Nat. Genet.">
        <title>Comparison of genome degradation in Paratyphi A and Typhi, human-restricted serovars of Salmonella enterica that cause typhoid.</title>
        <authorList>
            <person name="McClelland M."/>
            <person name="Sanderson K.E."/>
            <person name="Clifton S.W."/>
            <person name="Latreille P."/>
            <person name="Porwollik S."/>
            <person name="Sabo A."/>
            <person name="Meyer R."/>
            <person name="Bieri T."/>
            <person name="Ozersky P."/>
            <person name="McLellan M."/>
            <person name="Harkins C.R."/>
            <person name="Wang C."/>
            <person name="Nguyen C."/>
            <person name="Berghoff A."/>
            <person name="Elliott G."/>
            <person name="Kohlberg S."/>
            <person name="Strong C."/>
            <person name="Du F."/>
            <person name="Carter J."/>
            <person name="Kremizki C."/>
            <person name="Layman D."/>
            <person name="Leonard S."/>
            <person name="Sun H."/>
            <person name="Fulton L."/>
            <person name="Nash W."/>
            <person name="Miner T."/>
            <person name="Minx P."/>
            <person name="Delehaunty K."/>
            <person name="Fronick C."/>
            <person name="Magrini V."/>
            <person name="Nhan M."/>
            <person name="Warren W."/>
            <person name="Florea L."/>
            <person name="Spieth J."/>
            <person name="Wilson R.K."/>
        </authorList>
    </citation>
    <scope>NUCLEOTIDE SEQUENCE [LARGE SCALE GENOMIC DNA]</scope>
    <source>
        <strain>ATCC 9150 / SARB42</strain>
    </source>
</reference>
<comment type="subunit">
    <text evidence="1">Part of a tripartite efflux system composed of MdtA, MdtB and MdtC. MdtB forms a heteromultimer with MdtC.</text>
</comment>
<comment type="subcellular location">
    <subcellularLocation>
        <location evidence="1">Cell inner membrane</location>
        <topology evidence="1">Multi-pass membrane protein</topology>
    </subcellularLocation>
</comment>
<comment type="similarity">
    <text evidence="1">Belongs to the resistance-nodulation-cell division (RND) (TC 2.A.6) family. MdtB subfamily.</text>
</comment>
<evidence type="ECO:0000255" key="1">
    <source>
        <dbReference type="HAMAP-Rule" id="MF_01423"/>
    </source>
</evidence>
<proteinExistence type="inferred from homology"/>
<sequence length="1040" mass="111800">MQVLPPGSTGGPSRLFILRPVATTLLMAAILLAGIIGYRFLPVAALPEVDYPTIQVVTLYPGASPDVMTSSVTAPLERQFGQMSGLKQMSSQSSGGASVVTLQFQLTLPLDVAEQEVQAAINAATNLLPSDLPNPPIYSKVNPADPPIMTLAVTSNAMPMTQVEDMVETRVAQKISQVSGVGLVTLAGGQRPAIRVKLNAQAIAALGLTSETVRTAITGANVNSAKGSLDGPERAVTLSANDQMQSADEYRKLIIAYQNGAPVRLGDVATVEQGAENSWLGAWANQAPAIVMNVQRQPGANIIATADSIRQMLPQLTESLPKSVKVTVLSDRTTNIRASVRDTQFELMLAIALVVMIIYLFLRNIPATIIPGVAVPLSLIGTFAVMVFLDFSINNLTLMALTIATGFVVDDAIVVIENISRYIEKGEKPLAAALKGAGEIGFTIISLTFSLIAVLIPLLFMGDIVGRLFREFAVTLAVAILISAVVSLTLTPMMCACMLSQQSLRKQNRFSRACERMFDRVIASYGRGLAKVLNHPWLTLSVAFATLLLSVMLWIVIPKGFFPVQDNGIIQGTLQAPQSSSYASMAQRQRQVAERILQDPAVQSLTTFVGVDGANPTLNSARLQINLKPLDARDDRVQQVISRLQTAVATIPVVALYLQPTQDLTIDTQVSRTQYQFTLQATTLDALSHWVPKLQNALQSLPQLSEVSSDWQDRGLAAWVNVDRDSASRLGISIADVDNALYNAFGQRLISTIYTQANQYRVVLEHNTASTPGLAALETIRLTSRDGGTVSLSAIARIEQRFAPLSINHLDQFPVTTFSFNVPEGYSLGDAVQAILDTEKTLALPADITTQFQGSTLAFQAALGSTVWLIVAAVVAMYIVLGVLYESFIHPITILSTLPTAGVGALLALIIAGSELDIIAIIGIILLIGIVKKNAIMMIDFALAAEREQGMSPRDAIFQACLLRFRPILMTTLAALLGALPLMLSTGVGAELRRPLGIAMVGGLLVSQVLTLFTTPVIYLLFDRLSLYVKSRFPRHKEEA</sequence>
<dbReference type="EMBL" id="CP000026">
    <property type="protein sequence ID" value="AAV76736.1"/>
    <property type="molecule type" value="Genomic_DNA"/>
</dbReference>
<dbReference type="RefSeq" id="WP_001197809.1">
    <property type="nucleotide sequence ID" value="NC_006511.1"/>
</dbReference>
<dbReference type="SMR" id="Q5PDW7"/>
<dbReference type="KEGG" id="spt:SPA0738"/>
<dbReference type="HOGENOM" id="CLU_002755_1_1_6"/>
<dbReference type="Proteomes" id="UP000008185">
    <property type="component" value="Chromosome"/>
</dbReference>
<dbReference type="GO" id="GO:0005886">
    <property type="term" value="C:plasma membrane"/>
    <property type="evidence" value="ECO:0007669"/>
    <property type="project" value="UniProtKB-SubCell"/>
</dbReference>
<dbReference type="GO" id="GO:0042910">
    <property type="term" value="F:xenobiotic transmembrane transporter activity"/>
    <property type="evidence" value="ECO:0007669"/>
    <property type="project" value="TreeGrafter"/>
</dbReference>
<dbReference type="FunFam" id="1.20.1640.10:FF:000001">
    <property type="entry name" value="Efflux pump membrane transporter"/>
    <property type="match status" value="1"/>
</dbReference>
<dbReference type="FunFam" id="3.30.70.1430:FF:000001">
    <property type="entry name" value="Efflux pump membrane transporter"/>
    <property type="match status" value="1"/>
</dbReference>
<dbReference type="FunFam" id="3.30.2090.10:FF:000003">
    <property type="entry name" value="Multidrug resistance protein MdtB"/>
    <property type="match status" value="1"/>
</dbReference>
<dbReference type="Gene3D" id="3.30.70.1430">
    <property type="entry name" value="Multidrug efflux transporter AcrB pore domain"/>
    <property type="match status" value="2"/>
</dbReference>
<dbReference type="Gene3D" id="3.30.70.1440">
    <property type="entry name" value="Multidrug efflux transporter AcrB pore domain"/>
    <property type="match status" value="1"/>
</dbReference>
<dbReference type="Gene3D" id="3.30.70.1320">
    <property type="entry name" value="Multidrug efflux transporter AcrB pore domain like"/>
    <property type="match status" value="1"/>
</dbReference>
<dbReference type="Gene3D" id="3.30.2090.10">
    <property type="entry name" value="Multidrug efflux transporter AcrB TolC docking domain, DN and DC subdomains"/>
    <property type="match status" value="2"/>
</dbReference>
<dbReference type="Gene3D" id="1.20.1640.10">
    <property type="entry name" value="Multidrug efflux transporter AcrB transmembrane domain"/>
    <property type="match status" value="2"/>
</dbReference>
<dbReference type="HAMAP" id="MF_01423">
    <property type="entry name" value="MdtB"/>
    <property type="match status" value="1"/>
</dbReference>
<dbReference type="InterPro" id="IPR027463">
    <property type="entry name" value="AcrB_DN_DC_subdom"/>
</dbReference>
<dbReference type="InterPro" id="IPR001036">
    <property type="entry name" value="Acrflvin-R"/>
</dbReference>
<dbReference type="InterPro" id="IPR022831">
    <property type="entry name" value="Multidrug-R_MdtB"/>
</dbReference>
<dbReference type="NCBIfam" id="NF007798">
    <property type="entry name" value="PRK10503.1"/>
    <property type="match status" value="1"/>
</dbReference>
<dbReference type="NCBIfam" id="NF033617">
    <property type="entry name" value="RND_permease_2"/>
    <property type="match status" value="1"/>
</dbReference>
<dbReference type="PANTHER" id="PTHR32063">
    <property type="match status" value="1"/>
</dbReference>
<dbReference type="PANTHER" id="PTHR32063:SF21">
    <property type="entry name" value="MULTIDRUG RESISTANCE PROTEIN MDTB"/>
    <property type="match status" value="1"/>
</dbReference>
<dbReference type="Pfam" id="PF00873">
    <property type="entry name" value="ACR_tran"/>
    <property type="match status" value="1"/>
</dbReference>
<dbReference type="PRINTS" id="PR00702">
    <property type="entry name" value="ACRIFLAVINRP"/>
</dbReference>
<dbReference type="SUPFAM" id="SSF82693">
    <property type="entry name" value="Multidrug efflux transporter AcrB pore domain, PN1, PN2, PC1 and PC2 subdomains"/>
    <property type="match status" value="3"/>
</dbReference>
<dbReference type="SUPFAM" id="SSF82714">
    <property type="entry name" value="Multidrug efflux transporter AcrB TolC docking domain, DN and DC subdomains"/>
    <property type="match status" value="2"/>
</dbReference>
<dbReference type="SUPFAM" id="SSF82866">
    <property type="entry name" value="Multidrug efflux transporter AcrB transmembrane domain"/>
    <property type="match status" value="2"/>
</dbReference>
<organism>
    <name type="scientific">Salmonella paratyphi A (strain ATCC 9150 / SARB42)</name>
    <dbReference type="NCBI Taxonomy" id="295319"/>
    <lineage>
        <taxon>Bacteria</taxon>
        <taxon>Pseudomonadati</taxon>
        <taxon>Pseudomonadota</taxon>
        <taxon>Gammaproteobacteria</taxon>
        <taxon>Enterobacterales</taxon>
        <taxon>Enterobacteriaceae</taxon>
        <taxon>Salmonella</taxon>
    </lineage>
</organism>
<name>MDTB_SALPA</name>
<protein>
    <recommendedName>
        <fullName evidence="1">Multidrug resistance protein MdtB</fullName>
    </recommendedName>
    <alternativeName>
        <fullName evidence="1">Multidrug transporter MdtB</fullName>
    </alternativeName>
</protein>
<accession>Q5PDW7</accession>
<keyword id="KW-0997">Cell inner membrane</keyword>
<keyword id="KW-1003">Cell membrane</keyword>
<keyword id="KW-0472">Membrane</keyword>
<keyword id="KW-0812">Transmembrane</keyword>
<keyword id="KW-1133">Transmembrane helix</keyword>
<keyword id="KW-0813">Transport</keyword>
<gene>
    <name evidence="1" type="primary">mdtB</name>
    <name type="ordered locus">SPA0738</name>
</gene>